<comment type="function">
    <text evidence="5 6">Metal-independent phosphatase active against a broad range of phosphorylated substrates including nucleoside tri- and diphosphates, phosphorylated organic acids, and amino acids. Shows no activity against phytic acid, phosphorylated carbohydrates, and nucleoside monophosphates.</text>
</comment>
<comment type="biophysicochemical properties">
    <phDependence>
        <text evidence="5">Optimum pH is 7-9. Active from pH 5.5 to pH 9.5.</text>
    </phDependence>
</comment>
<comment type="interaction">
    <interactant intactId="EBI-31025">
        <id>Q12040</id>
    </interactant>
    <interactant intactId="EBI-20571">
        <id>Q12206</id>
        <label>WTM2</label>
    </interactant>
    <organismsDiffer>false</organismsDiffer>
    <experiments>3</experiments>
</comment>
<comment type="subcellular location">
    <subcellularLocation>
        <location evidence="3">Cytoplasm</location>
    </subcellularLocation>
    <subcellularLocation>
        <location evidence="3">Nucleus</location>
    </subcellularLocation>
</comment>
<comment type="miscellaneous">
    <text evidence="4">Present with 8300 molecules/cell in log phase SD medium.</text>
</comment>
<comment type="similarity">
    <text evidence="7">Belongs to the phosphoglycerate mutase family. BPG-dependent PGAM subfamily.</text>
</comment>
<reference key="1">
    <citation type="journal article" date="1996" name="Yeast">
        <title>DNA sequence analysis of the VPH1-SNF2 region on chromosome XV of Saccharomyces cerevisiae.</title>
        <authorList>
            <person name="Cheret G."/>
            <person name="Bernardi A."/>
            <person name="Sor F.J."/>
        </authorList>
    </citation>
    <scope>NUCLEOTIDE SEQUENCE [GENOMIC DNA]</scope>
    <source>
        <strain>ATCC 96604 / S288c / FY1679</strain>
    </source>
</reference>
<reference key="2">
    <citation type="journal article" date="1997" name="Nature">
        <title>The nucleotide sequence of Saccharomyces cerevisiae chromosome XV.</title>
        <authorList>
            <person name="Dujon B."/>
            <person name="Albermann K."/>
            <person name="Aldea M."/>
            <person name="Alexandraki D."/>
            <person name="Ansorge W."/>
            <person name="Arino J."/>
            <person name="Benes V."/>
            <person name="Bohn C."/>
            <person name="Bolotin-Fukuhara M."/>
            <person name="Bordonne R."/>
            <person name="Boyer J."/>
            <person name="Camasses A."/>
            <person name="Casamayor A."/>
            <person name="Casas C."/>
            <person name="Cheret G."/>
            <person name="Cziepluch C."/>
            <person name="Daignan-Fornier B."/>
            <person name="Dang V.-D."/>
            <person name="de Haan M."/>
            <person name="Delius H."/>
            <person name="Durand P."/>
            <person name="Fairhead C."/>
            <person name="Feldmann H."/>
            <person name="Gaillon L."/>
            <person name="Galisson F."/>
            <person name="Gamo F.-J."/>
            <person name="Gancedo C."/>
            <person name="Goffeau A."/>
            <person name="Goulding S.E."/>
            <person name="Grivell L.A."/>
            <person name="Habbig B."/>
            <person name="Hand N.J."/>
            <person name="Hani J."/>
            <person name="Hattenhorst U."/>
            <person name="Hebling U."/>
            <person name="Hernando Y."/>
            <person name="Herrero E."/>
            <person name="Heumann K."/>
            <person name="Hiesel R."/>
            <person name="Hilger F."/>
            <person name="Hofmann B."/>
            <person name="Hollenberg C.P."/>
            <person name="Hughes B."/>
            <person name="Jauniaux J.-C."/>
            <person name="Kalogeropoulos A."/>
            <person name="Katsoulou C."/>
            <person name="Kordes E."/>
            <person name="Lafuente M.J."/>
            <person name="Landt O."/>
            <person name="Louis E.J."/>
            <person name="Maarse A.C."/>
            <person name="Madania A."/>
            <person name="Mannhaupt G."/>
            <person name="Marck C."/>
            <person name="Martin R.P."/>
            <person name="Mewes H.-W."/>
            <person name="Michaux G."/>
            <person name="Paces V."/>
            <person name="Parle-McDermott A.G."/>
            <person name="Pearson B.M."/>
            <person name="Perrin A."/>
            <person name="Pettersson B."/>
            <person name="Poch O."/>
            <person name="Pohl T.M."/>
            <person name="Poirey R."/>
            <person name="Portetelle D."/>
            <person name="Pujol A."/>
            <person name="Purnelle B."/>
            <person name="Ramezani Rad M."/>
            <person name="Rechmann S."/>
            <person name="Schwager C."/>
            <person name="Schweizer M."/>
            <person name="Sor F."/>
            <person name="Sterky F."/>
            <person name="Tarassov I.A."/>
            <person name="Teodoru C."/>
            <person name="Tettelin H."/>
            <person name="Thierry A."/>
            <person name="Tobiasch E."/>
            <person name="Tzermia M."/>
            <person name="Uhlen M."/>
            <person name="Unseld M."/>
            <person name="Valens M."/>
            <person name="Vandenbol M."/>
            <person name="Vetter I."/>
            <person name="Vlcek C."/>
            <person name="Voet M."/>
            <person name="Volckaert G."/>
            <person name="Voss H."/>
            <person name="Wambutt R."/>
            <person name="Wedler H."/>
            <person name="Wiemann S."/>
            <person name="Winsor B."/>
            <person name="Wolfe K.H."/>
            <person name="Zollner A."/>
            <person name="Zumstein E."/>
            <person name="Kleine K."/>
        </authorList>
    </citation>
    <scope>NUCLEOTIDE SEQUENCE [LARGE SCALE GENOMIC DNA]</scope>
    <source>
        <strain>ATCC 204508 / S288c</strain>
    </source>
</reference>
<reference key="3">
    <citation type="journal article" date="2014" name="G3 (Bethesda)">
        <title>The reference genome sequence of Saccharomyces cerevisiae: Then and now.</title>
        <authorList>
            <person name="Engel S.R."/>
            <person name="Dietrich F.S."/>
            <person name="Fisk D.G."/>
            <person name="Binkley G."/>
            <person name="Balakrishnan R."/>
            <person name="Costanzo M.C."/>
            <person name="Dwight S.S."/>
            <person name="Hitz B.C."/>
            <person name="Karra K."/>
            <person name="Nash R.S."/>
            <person name="Weng S."/>
            <person name="Wong E.D."/>
            <person name="Lloyd P."/>
            <person name="Skrzypek M.S."/>
            <person name="Miyasato S.R."/>
            <person name="Simison M."/>
            <person name="Cherry J.M."/>
        </authorList>
    </citation>
    <scope>GENOME REANNOTATION</scope>
    <source>
        <strain>ATCC 204508 / S288c</strain>
    </source>
</reference>
<reference key="4">
    <citation type="journal article" date="2003" name="Nature">
        <title>Global analysis of protein localization in budding yeast.</title>
        <authorList>
            <person name="Huh W.-K."/>
            <person name="Falvo J.V."/>
            <person name="Gerke L.C."/>
            <person name="Carroll A.S."/>
            <person name="Howson R.W."/>
            <person name="Weissman J.S."/>
            <person name="O'Shea E.K."/>
        </authorList>
    </citation>
    <scope>SUBCELLULAR LOCATION [LARGE SCALE ANALYSIS]</scope>
</reference>
<reference key="5">
    <citation type="journal article" date="2003" name="Nature">
        <title>Global analysis of protein expression in yeast.</title>
        <authorList>
            <person name="Ghaemmaghami S."/>
            <person name="Huh W.-K."/>
            <person name="Bower K."/>
            <person name="Howson R.W."/>
            <person name="Belle A."/>
            <person name="Dephoure N."/>
            <person name="O'Shea E.K."/>
            <person name="Weissman J.S."/>
        </authorList>
    </citation>
    <scope>LEVEL OF PROTEIN EXPRESSION [LARGE SCALE ANALYSIS]</scope>
</reference>
<reference key="6">
    <citation type="journal article" date="2009" name="PLoS ONE">
        <title>Identification of nucleases and phosphatases by direct biochemical screen of the Saccharomyces cerevisiae proteome.</title>
        <authorList>
            <person name="Ho C.K."/>
            <person name="Lam A.F."/>
            <person name="Symington L.S."/>
        </authorList>
    </citation>
    <scope>FUNCTION</scope>
    <scope>BIOPHYSICOCHEMICAL PROPERTIES</scope>
</reference>
<reference key="7">
    <citation type="journal article" date="2010" name="J. Biol. Chem.">
        <title>Structure and activity of the metal-independent fructose-1,6-bisphosphatase YK23 from Saccharomyces cerevisiae.</title>
        <authorList>
            <person name="Kuznetsova E."/>
            <person name="Xu L."/>
            <person name="Singer A."/>
            <person name="Brown G."/>
            <person name="Dong A."/>
            <person name="Flick R."/>
            <person name="Cui H."/>
            <person name="Cuff M."/>
            <person name="Joachimiak A."/>
            <person name="Savchenko A."/>
            <person name="Yakunin A.F."/>
        </authorList>
    </citation>
    <scope>FUNCTION</scope>
    <scope>SUBSTRATE SPECIFICITY</scope>
</reference>
<organism>
    <name type="scientific">Saccharomyces cerevisiae (strain ATCC 204508 / S288c)</name>
    <name type="common">Baker's yeast</name>
    <dbReference type="NCBI Taxonomy" id="559292"/>
    <lineage>
        <taxon>Eukaryota</taxon>
        <taxon>Fungi</taxon>
        <taxon>Dikarya</taxon>
        <taxon>Ascomycota</taxon>
        <taxon>Saccharomycotina</taxon>
        <taxon>Saccharomycetes</taxon>
        <taxon>Saccharomycetales</taxon>
        <taxon>Saccharomycetaceae</taxon>
        <taxon>Saccharomyces</taxon>
    </lineage>
</organism>
<evidence type="ECO:0000250" key="1"/>
<evidence type="ECO:0000250" key="2">
    <source>
        <dbReference type="UniProtKB" id="P62707"/>
    </source>
</evidence>
<evidence type="ECO:0000269" key="3">
    <source>
    </source>
</evidence>
<evidence type="ECO:0000269" key="4">
    <source>
    </source>
</evidence>
<evidence type="ECO:0000269" key="5">
    <source>
    </source>
</evidence>
<evidence type="ECO:0000269" key="6">
    <source>
    </source>
</evidence>
<evidence type="ECO:0000305" key="7"/>
<name>YO283_YEAST</name>
<proteinExistence type="evidence at protein level"/>
<accession>Q12040</accession>
<accession>D6W2Y1</accession>
<keyword id="KW-0963">Cytoplasm</keyword>
<keyword id="KW-0378">Hydrolase</keyword>
<keyword id="KW-0539">Nucleus</keyword>
<keyword id="KW-1185">Reference proteome</keyword>
<gene>
    <name type="ordered locus">YOR283W</name>
</gene>
<dbReference type="EC" id="3.1.3.-"/>
<dbReference type="EMBL" id="X89633">
    <property type="protein sequence ID" value="CAA61787.1"/>
    <property type="molecule type" value="Genomic_DNA"/>
</dbReference>
<dbReference type="EMBL" id="Z75191">
    <property type="protein sequence ID" value="CAA99510.1"/>
    <property type="molecule type" value="Genomic_DNA"/>
</dbReference>
<dbReference type="EMBL" id="BK006948">
    <property type="protein sequence ID" value="DAA11047.1"/>
    <property type="molecule type" value="Genomic_DNA"/>
</dbReference>
<dbReference type="PIR" id="S67185">
    <property type="entry name" value="S67185"/>
</dbReference>
<dbReference type="RefSeq" id="NP_014926.1">
    <property type="nucleotide sequence ID" value="NM_001183702.1"/>
</dbReference>
<dbReference type="SMR" id="Q12040"/>
<dbReference type="BioGRID" id="34670">
    <property type="interactions" value="43"/>
</dbReference>
<dbReference type="DIP" id="DIP-6512N"/>
<dbReference type="FunCoup" id="Q12040">
    <property type="interactions" value="197"/>
</dbReference>
<dbReference type="IntAct" id="Q12040">
    <property type="interactions" value="8"/>
</dbReference>
<dbReference type="MINT" id="Q12040"/>
<dbReference type="STRING" id="4932.YOR283W"/>
<dbReference type="iPTMnet" id="Q12040"/>
<dbReference type="PaxDb" id="4932-YOR283W"/>
<dbReference type="PeptideAtlas" id="Q12040"/>
<dbReference type="EnsemblFungi" id="YOR283W_mRNA">
    <property type="protein sequence ID" value="YOR283W"/>
    <property type="gene ID" value="YOR283W"/>
</dbReference>
<dbReference type="GeneID" id="854457"/>
<dbReference type="KEGG" id="sce:YOR283W"/>
<dbReference type="AGR" id="SGD:S000005809"/>
<dbReference type="SGD" id="S000005809">
    <property type="gene designation" value="YOR283W"/>
</dbReference>
<dbReference type="VEuPathDB" id="FungiDB:YOR283W"/>
<dbReference type="eggNOG" id="KOG0235">
    <property type="taxonomic scope" value="Eukaryota"/>
</dbReference>
<dbReference type="GeneTree" id="ENSGT00940000163946"/>
<dbReference type="HOGENOM" id="CLU_033323_9_2_1"/>
<dbReference type="InParanoid" id="Q12040"/>
<dbReference type="OMA" id="NYPNMET"/>
<dbReference type="OrthoDB" id="354304at2759"/>
<dbReference type="BioCyc" id="YEAST:G3O-33769-MONOMER"/>
<dbReference type="BioGRID-ORCS" id="854457">
    <property type="hits" value="2 hits in 10 CRISPR screens"/>
</dbReference>
<dbReference type="PRO" id="PR:Q12040"/>
<dbReference type="Proteomes" id="UP000002311">
    <property type="component" value="Chromosome XV"/>
</dbReference>
<dbReference type="RNAct" id="Q12040">
    <property type="molecule type" value="protein"/>
</dbReference>
<dbReference type="GO" id="GO:0005737">
    <property type="term" value="C:cytoplasm"/>
    <property type="evidence" value="ECO:0007005"/>
    <property type="project" value="SGD"/>
</dbReference>
<dbReference type="GO" id="GO:0005634">
    <property type="term" value="C:nucleus"/>
    <property type="evidence" value="ECO:0007005"/>
    <property type="project" value="SGD"/>
</dbReference>
<dbReference type="GO" id="GO:0016791">
    <property type="term" value="F:phosphatase activity"/>
    <property type="evidence" value="ECO:0000314"/>
    <property type="project" value="SGD"/>
</dbReference>
<dbReference type="CDD" id="cd07067">
    <property type="entry name" value="HP_PGM_like"/>
    <property type="match status" value="1"/>
</dbReference>
<dbReference type="FunFam" id="3.40.50.1240:FF:000051">
    <property type="entry name" value="Phosphoglycerate mutase"/>
    <property type="match status" value="1"/>
</dbReference>
<dbReference type="Gene3D" id="3.40.50.1240">
    <property type="entry name" value="Phosphoglycerate mutase-like"/>
    <property type="match status" value="1"/>
</dbReference>
<dbReference type="InterPro" id="IPR013078">
    <property type="entry name" value="His_Pase_superF_clade-1"/>
</dbReference>
<dbReference type="InterPro" id="IPR029033">
    <property type="entry name" value="His_PPase_superfam"/>
</dbReference>
<dbReference type="InterPro" id="IPR001345">
    <property type="entry name" value="PG/BPGM_mutase_AS"/>
</dbReference>
<dbReference type="InterPro" id="IPR051695">
    <property type="entry name" value="Phosphoglycerate_Mutase"/>
</dbReference>
<dbReference type="PANTHER" id="PTHR46517">
    <property type="entry name" value="FRUCTOSE-2,6-BISPHOSPHATASE TIGAR"/>
    <property type="match status" value="1"/>
</dbReference>
<dbReference type="PANTHER" id="PTHR46517:SF1">
    <property type="entry name" value="FRUCTOSE-2,6-BISPHOSPHATASE TIGAR"/>
    <property type="match status" value="1"/>
</dbReference>
<dbReference type="Pfam" id="PF00300">
    <property type="entry name" value="His_Phos_1"/>
    <property type="match status" value="1"/>
</dbReference>
<dbReference type="SMART" id="SM00855">
    <property type="entry name" value="PGAM"/>
    <property type="match status" value="1"/>
</dbReference>
<dbReference type="SUPFAM" id="SSF53254">
    <property type="entry name" value="Phosphoglycerate mutase-like"/>
    <property type="match status" value="1"/>
</dbReference>
<dbReference type="PROSITE" id="PS00175">
    <property type="entry name" value="PG_MUTASE"/>
    <property type="match status" value="1"/>
</dbReference>
<feature type="chain" id="PRO_0000245254" description="Broad-specificity phosphatase YOR283W">
    <location>
        <begin position="1"/>
        <end position="230"/>
    </location>
</feature>
<feature type="active site" description="Tele-phosphohistidine intermediate" evidence="2">
    <location>
        <position position="24"/>
    </location>
</feature>
<feature type="active site" description="Proton donor/acceptor" evidence="2">
    <location>
        <position position="102"/>
    </location>
</feature>
<feature type="binding site" evidence="1">
    <location>
        <begin position="36"/>
        <end position="37"/>
    </location>
    <ligand>
        <name>substrate</name>
    </ligand>
</feature>
<feature type="binding site" evidence="1">
    <location>
        <begin position="102"/>
        <end position="105"/>
    </location>
    <ligand>
        <name>substrate</name>
    </ligand>
</feature>
<feature type="site" description="Transition state stabilizer" evidence="2">
    <location>
        <position position="166"/>
    </location>
</feature>
<protein>
    <recommendedName>
        <fullName>Broad-specificity phosphatase YOR283W</fullName>
        <ecNumber>3.1.3.-</ecNumber>
    </recommendedName>
</protein>
<sequence>MTKEVPYYCDNDDNNIIRLFIIRHGQTEHNVKKILQGHKDTSINPTGEEQATKLGHYLRSRGIHFDKVVSSDLKRCRQTTALVLKHSKQENVPTSYTSGLRERYMGVIEGMQITEAEKYADKHGEGSFRNFGEKSDDFVARLTGCVEEEVAEASNEGVKNLALVSHGGAIRMILQWLKYENHQAHKIIVFNTSVTIVDYVKDSKQFIVRRVGNTQHLGDGEFVVSDLRLR</sequence>